<evidence type="ECO:0000250" key="1"/>
<protein>
    <recommendedName>
        <fullName>NADH-ubiquinone oxidoreductase 29 kDa subunit</fullName>
        <ecNumber>7.1.1.2</ecNumber>
    </recommendedName>
    <alternativeName>
        <fullName>Complex I-29kD</fullName>
        <shortName>CI-29kD</shortName>
    </alternativeName>
</protein>
<proteinExistence type="evidence at protein level"/>
<reference key="1">
    <citation type="journal article" date="1994" name="J. Biol. Chem.">
        <title>Purification of the NADH:ubiquinone oxidoreductase (complex I) of the respiratory chain from the inner mitochondrial membrane of Solanum tuberosum.</title>
        <authorList>
            <person name="Herz U."/>
            <person name="Schroeder W."/>
            <person name="Liddell A."/>
            <person name="Leaver C.J."/>
            <person name="Brennicke A."/>
            <person name="Grohmann L."/>
        </authorList>
    </citation>
    <scope>PROTEIN SEQUENCE</scope>
    <source>
        <strain>cv. Bintje</strain>
        <tissue>Tuber</tissue>
    </source>
</reference>
<comment type="function">
    <text>Transfer of electrons from NADH to the respiratory chain. The immediate electron acceptor for the enzyme is believed to be ubiquinone.</text>
</comment>
<comment type="catalytic activity">
    <reaction>
        <text>a ubiquinone + NADH + 5 H(+)(in) = a ubiquinol + NAD(+) + 4 H(+)(out)</text>
        <dbReference type="Rhea" id="RHEA:29091"/>
        <dbReference type="Rhea" id="RHEA-COMP:9565"/>
        <dbReference type="Rhea" id="RHEA-COMP:9566"/>
        <dbReference type="ChEBI" id="CHEBI:15378"/>
        <dbReference type="ChEBI" id="CHEBI:16389"/>
        <dbReference type="ChEBI" id="CHEBI:17976"/>
        <dbReference type="ChEBI" id="CHEBI:57540"/>
        <dbReference type="ChEBI" id="CHEBI:57945"/>
        <dbReference type="EC" id="7.1.1.2"/>
    </reaction>
</comment>
<comment type="subunit">
    <text evidence="1">Complex I is composed of about 45 different subunits.</text>
</comment>
<comment type="subcellular location">
    <subcellularLocation>
        <location>Mitochondrion inner membrane</location>
        <topology>Peripheral membrane protein</topology>
        <orientation>Matrix side</orientation>
    </subcellularLocation>
</comment>
<name>NUO5_SOLTU</name>
<sequence length="23" mass="2654">ATEAQAAINEXPDRVKKDYFYGR</sequence>
<accession>P80262</accession>
<dbReference type="EC" id="7.1.1.2"/>
<dbReference type="PIR" id="C49732">
    <property type="entry name" value="C49732"/>
</dbReference>
<dbReference type="InParanoid" id="P80262"/>
<dbReference type="Proteomes" id="UP000011115">
    <property type="component" value="Unassembled WGS sequence"/>
</dbReference>
<dbReference type="GO" id="GO:0005743">
    <property type="term" value="C:mitochondrial inner membrane"/>
    <property type="evidence" value="ECO:0007669"/>
    <property type="project" value="UniProtKB-SubCell"/>
</dbReference>
<dbReference type="GO" id="GO:0008137">
    <property type="term" value="F:NADH dehydrogenase (ubiquinone) activity"/>
    <property type="evidence" value="ECO:0007669"/>
    <property type="project" value="UniProtKB-EC"/>
</dbReference>
<feature type="chain" id="PRO_0000118852" description="NADH-ubiquinone oxidoreductase 29 kDa subunit">
    <location>
        <begin position="1"/>
        <end position="23" status="greater than"/>
    </location>
</feature>
<feature type="non-terminal residue">
    <location>
        <position position="23"/>
    </location>
</feature>
<keyword id="KW-0903">Direct protein sequencing</keyword>
<keyword id="KW-0472">Membrane</keyword>
<keyword id="KW-0496">Mitochondrion</keyword>
<keyword id="KW-0999">Mitochondrion inner membrane</keyword>
<keyword id="KW-0520">NAD</keyword>
<keyword id="KW-0560">Oxidoreductase</keyword>
<keyword id="KW-1185">Reference proteome</keyword>
<keyword id="KW-1278">Translocase</keyword>
<keyword id="KW-0830">Ubiquinone</keyword>
<organism>
    <name type="scientific">Solanum tuberosum</name>
    <name type="common">Potato</name>
    <dbReference type="NCBI Taxonomy" id="4113"/>
    <lineage>
        <taxon>Eukaryota</taxon>
        <taxon>Viridiplantae</taxon>
        <taxon>Streptophyta</taxon>
        <taxon>Embryophyta</taxon>
        <taxon>Tracheophyta</taxon>
        <taxon>Spermatophyta</taxon>
        <taxon>Magnoliopsida</taxon>
        <taxon>eudicotyledons</taxon>
        <taxon>Gunneridae</taxon>
        <taxon>Pentapetalae</taxon>
        <taxon>asterids</taxon>
        <taxon>lamiids</taxon>
        <taxon>Solanales</taxon>
        <taxon>Solanaceae</taxon>
        <taxon>Solanoideae</taxon>
        <taxon>Solaneae</taxon>
        <taxon>Solanum</taxon>
    </lineage>
</organism>